<accession>Q9X6R0</accession>
<comment type="function">
    <text evidence="1">Catalyzes the irreversible transfer of a propylamine group from the amino donor S-adenosylmethioninamine (decarboxy-AdoMet) to putrescine (1,4-diaminobutane) to yield spermidine.</text>
</comment>
<comment type="catalytic activity">
    <reaction evidence="1">
        <text>S-adenosyl 3-(methylsulfanyl)propylamine + putrescine = S-methyl-5'-thioadenosine + spermidine + H(+)</text>
        <dbReference type="Rhea" id="RHEA:12721"/>
        <dbReference type="ChEBI" id="CHEBI:15378"/>
        <dbReference type="ChEBI" id="CHEBI:17509"/>
        <dbReference type="ChEBI" id="CHEBI:57443"/>
        <dbReference type="ChEBI" id="CHEBI:57834"/>
        <dbReference type="ChEBI" id="CHEBI:326268"/>
        <dbReference type="EC" id="2.5.1.16"/>
    </reaction>
</comment>
<comment type="pathway">
    <text evidence="1">Amine and polyamine biosynthesis; spermidine biosynthesis; spermidine from putrescine: step 1/1.</text>
</comment>
<comment type="subunit">
    <text evidence="1">Homodimer or homotetramer.</text>
</comment>
<comment type="subcellular location">
    <subcellularLocation>
        <location evidence="1">Cytoplasm</location>
    </subcellularLocation>
</comment>
<comment type="similarity">
    <text evidence="1">Belongs to the spermidine/spermine synthase family.</text>
</comment>
<comment type="sequence caution" evidence="2">
    <conflict type="erroneous initiation">
        <sequence resource="EMBL-CDS" id="AAD32692"/>
    </conflict>
    <text>Extended N-terminus.</text>
</comment>
<gene>
    <name evidence="1" type="primary">speE1</name>
    <name type="synonym">speE</name>
    <name type="ordered locus">PA1687</name>
</gene>
<proteinExistence type="inferred from homology"/>
<name>SPEE1_PSEAE</name>
<evidence type="ECO:0000255" key="1">
    <source>
        <dbReference type="HAMAP-Rule" id="MF_00198"/>
    </source>
</evidence>
<evidence type="ECO:0000305" key="2"/>
<sequence>MSDYQETLYQGYGQRFSIDNMLHEVRTEHQHLVIFENARMGRVMALDGVIQTTEADEFIYHEMLTHVPILAHGAARRVLIIGGGDGGMLREVAKHKSVERITMVEIDGTVVDMCKEFLPNHSQGAFDDPRLNLVIDDGMRFVATTEERFDVIISDSTDPIGPGEVLFSENFYQACRRCLNEGGILVTQNGTPFMQLEEVRTTAARTDGLFADWHFYQAAVPTYIGGAMTFAWGSTHEGLRRLPLETLRQRFRDSGIATRYYNADIHLGAFALPQYVLQAIGKQDND</sequence>
<reference key="1">
    <citation type="submission" date="1999-04" db="EMBL/GenBank/DDBJ databases">
        <title>Identification of a trans-regulatory locus involved in the regulation of carbohydrate transport in Pseudomonas aeruginosa.</title>
        <authorList>
            <person name="Adewoye L.O."/>
            <person name="Worobec E.A."/>
        </authorList>
    </citation>
    <scope>NUCLEOTIDE SEQUENCE [GENOMIC DNA]</scope>
    <source>
        <strain>H103</strain>
    </source>
</reference>
<reference key="2">
    <citation type="journal article" date="2000" name="Nature">
        <title>Complete genome sequence of Pseudomonas aeruginosa PAO1, an opportunistic pathogen.</title>
        <authorList>
            <person name="Stover C.K."/>
            <person name="Pham X.-Q.T."/>
            <person name="Erwin A.L."/>
            <person name="Mizoguchi S.D."/>
            <person name="Warrener P."/>
            <person name="Hickey M.J."/>
            <person name="Brinkman F.S.L."/>
            <person name="Hufnagle W.O."/>
            <person name="Kowalik D.J."/>
            <person name="Lagrou M."/>
            <person name="Garber R.L."/>
            <person name="Goltry L."/>
            <person name="Tolentino E."/>
            <person name="Westbrock-Wadman S."/>
            <person name="Yuan Y."/>
            <person name="Brody L.L."/>
            <person name="Coulter S.N."/>
            <person name="Folger K.R."/>
            <person name="Kas A."/>
            <person name="Larbig K."/>
            <person name="Lim R.M."/>
            <person name="Smith K.A."/>
            <person name="Spencer D.H."/>
            <person name="Wong G.K.-S."/>
            <person name="Wu Z."/>
            <person name="Paulsen I.T."/>
            <person name="Reizer J."/>
            <person name="Saier M.H. Jr."/>
            <person name="Hancock R.E.W."/>
            <person name="Lory S."/>
            <person name="Olson M.V."/>
        </authorList>
    </citation>
    <scope>NUCLEOTIDE SEQUENCE [LARGE SCALE GENOMIC DNA]</scope>
    <source>
        <strain>ATCC 15692 / DSM 22644 / CIP 104116 / JCM 14847 / LMG 12228 / 1C / PRS 101 / PAO1</strain>
    </source>
</reference>
<keyword id="KW-0963">Cytoplasm</keyword>
<keyword id="KW-0620">Polyamine biosynthesis</keyword>
<keyword id="KW-1185">Reference proteome</keyword>
<keyword id="KW-0745">Spermidine biosynthesis</keyword>
<keyword id="KW-0808">Transferase</keyword>
<feature type="chain" id="PRO_0000156497" description="Polyamine aminopropyltransferase 1">
    <location>
        <begin position="1"/>
        <end position="286"/>
    </location>
</feature>
<feature type="domain" description="PABS" evidence="1">
    <location>
        <begin position="1"/>
        <end position="235"/>
    </location>
</feature>
<feature type="active site" description="Proton acceptor" evidence="1">
    <location>
        <position position="155"/>
    </location>
</feature>
<feature type="binding site" evidence="1">
    <location>
        <position position="30"/>
    </location>
    <ligand>
        <name>S-methyl-5'-thioadenosine</name>
        <dbReference type="ChEBI" id="CHEBI:17509"/>
    </ligand>
</feature>
<feature type="binding site" evidence="1">
    <location>
        <position position="61"/>
    </location>
    <ligand>
        <name>spermidine</name>
        <dbReference type="ChEBI" id="CHEBI:57834"/>
    </ligand>
</feature>
<feature type="binding site" evidence="1">
    <location>
        <position position="85"/>
    </location>
    <ligand>
        <name>spermidine</name>
        <dbReference type="ChEBI" id="CHEBI:57834"/>
    </ligand>
</feature>
<feature type="binding site" evidence="1">
    <location>
        <position position="105"/>
    </location>
    <ligand>
        <name>S-methyl-5'-thioadenosine</name>
        <dbReference type="ChEBI" id="CHEBI:17509"/>
    </ligand>
</feature>
<feature type="binding site" evidence="1">
    <location>
        <begin position="137"/>
        <end position="138"/>
    </location>
    <ligand>
        <name>S-methyl-5'-thioadenosine</name>
        <dbReference type="ChEBI" id="CHEBI:17509"/>
    </ligand>
</feature>
<feature type="binding site" evidence="1">
    <location>
        <begin position="155"/>
        <end position="158"/>
    </location>
    <ligand>
        <name>spermidine</name>
        <dbReference type="ChEBI" id="CHEBI:57834"/>
    </ligand>
</feature>
<feature type="binding site" evidence="1">
    <location>
        <position position="162"/>
    </location>
    <ligand>
        <name>S-methyl-5'-thioadenosine</name>
        <dbReference type="ChEBI" id="CHEBI:17509"/>
    </ligand>
</feature>
<dbReference type="EC" id="2.5.1.16" evidence="1"/>
<dbReference type="EMBL" id="AF143948">
    <property type="protein sequence ID" value="AAD32692.1"/>
    <property type="status" value="ALT_INIT"/>
    <property type="molecule type" value="Genomic_DNA"/>
</dbReference>
<dbReference type="EMBL" id="AE004091">
    <property type="protein sequence ID" value="AAG05076.1"/>
    <property type="molecule type" value="Genomic_DNA"/>
</dbReference>
<dbReference type="PIR" id="G83433">
    <property type="entry name" value="G83433"/>
</dbReference>
<dbReference type="RefSeq" id="NP_250378.1">
    <property type="nucleotide sequence ID" value="NC_002516.2"/>
</dbReference>
<dbReference type="RefSeq" id="WP_003114619.1">
    <property type="nucleotide sequence ID" value="NZ_QZGE01000003.1"/>
</dbReference>
<dbReference type="SMR" id="Q9X6R0"/>
<dbReference type="FunCoup" id="Q9X6R0">
    <property type="interactions" value="555"/>
</dbReference>
<dbReference type="STRING" id="208964.PA1687"/>
<dbReference type="PaxDb" id="208964-PA1687"/>
<dbReference type="DNASU" id="883061"/>
<dbReference type="GeneID" id="883061"/>
<dbReference type="KEGG" id="pae:PA1687"/>
<dbReference type="PATRIC" id="fig|208964.12.peg.1749"/>
<dbReference type="PseudoCAP" id="PA1687"/>
<dbReference type="HOGENOM" id="CLU_048199_0_0_6"/>
<dbReference type="InParanoid" id="Q9X6R0"/>
<dbReference type="OrthoDB" id="9793120at2"/>
<dbReference type="PhylomeDB" id="Q9X6R0"/>
<dbReference type="BioCyc" id="PAER208964:G1FZ6-1718-MONOMER"/>
<dbReference type="UniPathway" id="UPA00248">
    <property type="reaction ID" value="UER00314"/>
</dbReference>
<dbReference type="Proteomes" id="UP000002438">
    <property type="component" value="Chromosome"/>
</dbReference>
<dbReference type="GO" id="GO:0005829">
    <property type="term" value="C:cytosol"/>
    <property type="evidence" value="ECO:0000318"/>
    <property type="project" value="GO_Central"/>
</dbReference>
<dbReference type="GO" id="GO:0004766">
    <property type="term" value="F:spermidine synthase activity"/>
    <property type="evidence" value="ECO:0000318"/>
    <property type="project" value="GO_Central"/>
</dbReference>
<dbReference type="GO" id="GO:0008295">
    <property type="term" value="P:spermidine biosynthetic process"/>
    <property type="evidence" value="ECO:0000318"/>
    <property type="project" value="GO_Central"/>
</dbReference>
<dbReference type="CDD" id="cd02440">
    <property type="entry name" value="AdoMet_MTases"/>
    <property type="match status" value="1"/>
</dbReference>
<dbReference type="FunFam" id="2.30.140.10:FF:000002">
    <property type="entry name" value="Polyamine aminopropyltransferase"/>
    <property type="match status" value="1"/>
</dbReference>
<dbReference type="Gene3D" id="2.30.140.10">
    <property type="entry name" value="Spermidine synthase, tetramerisation domain"/>
    <property type="match status" value="1"/>
</dbReference>
<dbReference type="Gene3D" id="3.40.50.150">
    <property type="entry name" value="Vaccinia Virus protein VP39"/>
    <property type="match status" value="1"/>
</dbReference>
<dbReference type="HAMAP" id="MF_00198">
    <property type="entry name" value="Spermidine_synth"/>
    <property type="match status" value="1"/>
</dbReference>
<dbReference type="InterPro" id="IPR030374">
    <property type="entry name" value="PABS"/>
</dbReference>
<dbReference type="InterPro" id="IPR030373">
    <property type="entry name" value="PABS_CS"/>
</dbReference>
<dbReference type="InterPro" id="IPR029063">
    <property type="entry name" value="SAM-dependent_MTases_sf"/>
</dbReference>
<dbReference type="InterPro" id="IPR001045">
    <property type="entry name" value="Spermi_synthase"/>
</dbReference>
<dbReference type="InterPro" id="IPR035246">
    <property type="entry name" value="Spermidine_synt_N"/>
</dbReference>
<dbReference type="InterPro" id="IPR037163">
    <property type="entry name" value="Spermidine_synt_N_sf"/>
</dbReference>
<dbReference type="NCBIfam" id="NF002010">
    <property type="entry name" value="PRK00811.1"/>
    <property type="match status" value="1"/>
</dbReference>
<dbReference type="NCBIfam" id="TIGR00417">
    <property type="entry name" value="speE"/>
    <property type="match status" value="1"/>
</dbReference>
<dbReference type="PANTHER" id="PTHR11558:SF11">
    <property type="entry name" value="SPERMIDINE SYNTHASE"/>
    <property type="match status" value="1"/>
</dbReference>
<dbReference type="PANTHER" id="PTHR11558">
    <property type="entry name" value="SPERMIDINE/SPERMINE SYNTHASE"/>
    <property type="match status" value="1"/>
</dbReference>
<dbReference type="Pfam" id="PF17284">
    <property type="entry name" value="Spermine_synt_N"/>
    <property type="match status" value="1"/>
</dbReference>
<dbReference type="Pfam" id="PF01564">
    <property type="entry name" value="Spermine_synth"/>
    <property type="match status" value="1"/>
</dbReference>
<dbReference type="SUPFAM" id="SSF53335">
    <property type="entry name" value="S-adenosyl-L-methionine-dependent methyltransferases"/>
    <property type="match status" value="1"/>
</dbReference>
<dbReference type="PROSITE" id="PS01330">
    <property type="entry name" value="PABS_1"/>
    <property type="match status" value="1"/>
</dbReference>
<dbReference type="PROSITE" id="PS51006">
    <property type="entry name" value="PABS_2"/>
    <property type="match status" value="1"/>
</dbReference>
<organism>
    <name type="scientific">Pseudomonas aeruginosa (strain ATCC 15692 / DSM 22644 / CIP 104116 / JCM 14847 / LMG 12228 / 1C / PRS 101 / PAO1)</name>
    <dbReference type="NCBI Taxonomy" id="208964"/>
    <lineage>
        <taxon>Bacteria</taxon>
        <taxon>Pseudomonadati</taxon>
        <taxon>Pseudomonadota</taxon>
        <taxon>Gammaproteobacteria</taxon>
        <taxon>Pseudomonadales</taxon>
        <taxon>Pseudomonadaceae</taxon>
        <taxon>Pseudomonas</taxon>
    </lineage>
</organism>
<protein>
    <recommendedName>
        <fullName evidence="1">Polyamine aminopropyltransferase 1</fullName>
    </recommendedName>
    <alternativeName>
        <fullName evidence="1">Putrescine aminopropyltransferase 1</fullName>
        <shortName evidence="1">PAPT 1</shortName>
    </alternativeName>
    <alternativeName>
        <fullName evidence="1">Spermidine synthase 1</fullName>
        <shortName evidence="1">SPDS 1</shortName>
        <shortName evidence="1">SPDSY 1</shortName>
        <ecNumber evidence="1">2.5.1.16</ecNumber>
    </alternativeName>
</protein>